<protein>
    <recommendedName>
        <fullName evidence="8">Tropomyosin</fullName>
    </recommendedName>
    <alternativeName>
        <fullName evidence="7 10">Tropomyosin, slow-tonic isoform</fullName>
        <shortName evidence="10">Tm-Chio-tonic</shortName>
    </alternativeName>
</protein>
<feature type="chain" id="PRO_0000398787" description="Tropomyosin">
    <location>
        <begin position="1"/>
        <end position="284"/>
    </location>
</feature>
<feature type="region of interest" description="Disordered" evidence="4">
    <location>
        <begin position="1"/>
        <end position="49"/>
    </location>
</feature>
<feature type="region of interest" description="Disordered" evidence="4">
    <location>
        <begin position="103"/>
        <end position="126"/>
    </location>
</feature>
<feature type="coiled-coil region" evidence="1">
    <location>
        <begin position="1"/>
        <end position="284"/>
    </location>
</feature>
<feature type="compositionally biased region" description="Basic and acidic residues" evidence="4">
    <location>
        <begin position="12"/>
        <end position="45"/>
    </location>
</feature>
<feature type="modified residue" description="N-acetylmethionine" evidence="6">
    <location>
        <position position="1"/>
    </location>
</feature>
<comment type="function">
    <text evidence="2">Tropomyosin, in association with the troponin complex, plays a central role in the calcium dependent regulation of muscle contraction.</text>
</comment>
<comment type="subunit">
    <text evidence="6">Homodimer.</text>
</comment>
<comment type="tissue specificity">
    <text evidence="5">Expressed in leg muscle and chest protection muscle (at protein level).</text>
</comment>
<comment type="domain">
    <text evidence="9">The molecule is in a coiled coil structure that is formed by 2 polypeptide chains. The sequence exhibits a prominent seven-residues periodicity.</text>
</comment>
<comment type="mass spectrometry"/>
<comment type="allergen">
    <text evidence="5 6">Causes an allergic reaction in human.</text>
</comment>
<comment type="similarity">
    <text evidence="3">Belongs to the tropomyosin family.</text>
</comment>
<dbReference type="EMBL" id="AB270634">
    <property type="protein sequence ID" value="BAF47267.1"/>
    <property type="molecule type" value="mRNA"/>
</dbReference>
<dbReference type="SMR" id="A2V735"/>
<dbReference type="Allergome" id="3807">
    <property type="allergen name" value="Chi o 1"/>
</dbReference>
<dbReference type="Allergome" id="4087">
    <property type="allergen name" value="Chi o 1.0101"/>
</dbReference>
<dbReference type="iPTMnet" id="A2V735"/>
<dbReference type="GO" id="GO:0042803">
    <property type="term" value="F:protein homodimerization activity"/>
    <property type="evidence" value="ECO:0000314"/>
    <property type="project" value="UniProtKB"/>
</dbReference>
<dbReference type="FunFam" id="1.20.5.170:FF:000005">
    <property type="entry name" value="Tropomyosin alpha-1 chain"/>
    <property type="match status" value="1"/>
</dbReference>
<dbReference type="FunFam" id="1.20.5.170:FF:000001">
    <property type="entry name" value="Tropomyosin alpha-1 chain isoform 1"/>
    <property type="match status" value="1"/>
</dbReference>
<dbReference type="FunFam" id="1.20.5.340:FF:000001">
    <property type="entry name" value="Tropomyosin alpha-1 chain isoform 2"/>
    <property type="match status" value="1"/>
</dbReference>
<dbReference type="Gene3D" id="1.20.5.170">
    <property type="match status" value="2"/>
</dbReference>
<dbReference type="Gene3D" id="1.20.5.340">
    <property type="match status" value="1"/>
</dbReference>
<dbReference type="InterPro" id="IPR000533">
    <property type="entry name" value="Tropomyosin"/>
</dbReference>
<dbReference type="PANTHER" id="PTHR19269">
    <property type="entry name" value="TROPOMYOSIN"/>
    <property type="match status" value="1"/>
</dbReference>
<dbReference type="Pfam" id="PF00261">
    <property type="entry name" value="Tropomyosin"/>
    <property type="match status" value="1"/>
</dbReference>
<dbReference type="PRINTS" id="PR00194">
    <property type="entry name" value="TROPOMYOSIN"/>
</dbReference>
<dbReference type="SUPFAM" id="SSF57997">
    <property type="entry name" value="Tropomyosin"/>
    <property type="match status" value="1"/>
</dbReference>
<dbReference type="PROSITE" id="PS00326">
    <property type="entry name" value="TROPOMYOSIN"/>
    <property type="match status" value="1"/>
</dbReference>
<name>TPM_CHIOP</name>
<gene>
    <name evidence="1" type="primary">TM1</name>
</gene>
<accession>A2V735</accession>
<sequence>MDAIKKKMQAMKLEKDNAMDKADTLEQQNKEANLRAEKTEEEIRANQKKSQLVENELDHAQEQLSAATHKLVEKEKAFANAEGEVAALNRRIQLLEEDLERSEERLNTATTKLAEASQAADESERMRKVLENRSLSDEERMDALENQLKEARFLAEEADRKYDEVARKLAMVEADLERAEERAESGESKIVELEEELRVVGNNLKSLEVSEEKANQREETYKEQIKTLANKLKAAEARAEFAERSVQKLQKEVDRLEDELVNEKEKYKNIADEMDQAFSELSGF</sequence>
<reference evidence="10" key="1">
    <citation type="journal article" date="2007" name="J. Agric. Food Chem.">
        <title>Molecular cloning of tropomyosins identified as allergens in six species of crustaceans.</title>
        <authorList>
            <person name="Motoyama K."/>
            <person name="Suma Y."/>
            <person name="Ishizaki S."/>
            <person name="Nagashima Y."/>
            <person name="Shiomi K."/>
        </authorList>
    </citation>
    <scope>NUCLEOTIDE SEQUENCE [MRNA]</scope>
    <scope>TISSUE SPECIFICITY</scope>
    <scope>ALLERGEN</scope>
    <source>
        <tissue evidence="5">Muscle</tissue>
    </source>
</reference>
<reference evidence="9" key="2">
    <citation type="journal article" date="2010" name="J. Mass Spectrom.">
        <title>Characterization and de novo sequencing of snow crab tropomyosin enzymatic peptides by both electrospary ionization and matrix-assisted laser desorption ionization QqToF tandemmass spectrometry.</title>
        <authorList>
            <person name="Abdel Rahman A.M."/>
            <person name="Lopata A.L."/>
            <person name="O'Hehir R.E."/>
            <person name="Robinson J.J."/>
            <person name="Banoub J.H."/>
            <person name="Helleur R.J."/>
        </authorList>
    </citation>
    <scope>PROTEIN SEQUENCE OF 8-284</scope>
    <scope>SUBUNIT</scope>
    <scope>MASS SPECTROMETRY</scope>
    <scope>ALLERGENICITY</scope>
    <scope>ACETYLATION AT MET-1</scope>
    <source>
        <tissue evidence="6">Muscle</tissue>
    </source>
</reference>
<evidence type="ECO:0000250" key="1">
    <source>
        <dbReference type="UniProtKB" id="O44119"/>
    </source>
</evidence>
<evidence type="ECO:0000250" key="2">
    <source>
        <dbReference type="UniProtKB" id="Q22866"/>
    </source>
</evidence>
<evidence type="ECO:0000255" key="3"/>
<evidence type="ECO:0000256" key="4">
    <source>
        <dbReference type="SAM" id="MobiDB-lite"/>
    </source>
</evidence>
<evidence type="ECO:0000269" key="5">
    <source>
    </source>
</evidence>
<evidence type="ECO:0000269" key="6">
    <source>
    </source>
</evidence>
<evidence type="ECO:0000303" key="7">
    <source>
    </source>
</evidence>
<evidence type="ECO:0000303" key="8">
    <source>
    </source>
</evidence>
<evidence type="ECO:0000305" key="9"/>
<evidence type="ECO:0000312" key="10">
    <source>
        <dbReference type="EMBL" id="BAF47267.1"/>
    </source>
</evidence>
<keyword id="KW-0007">Acetylation</keyword>
<keyword id="KW-0020">Allergen</keyword>
<keyword id="KW-0175">Coiled coil</keyword>
<keyword id="KW-0903">Direct protein sequencing</keyword>
<keyword id="KW-0677">Repeat</keyword>
<organism>
    <name type="scientific">Chionoecetes opilio</name>
    <name type="common">Atlantic snow crab</name>
    <name type="synonym">Cancer opilio</name>
    <dbReference type="NCBI Taxonomy" id="41210"/>
    <lineage>
        <taxon>Eukaryota</taxon>
        <taxon>Metazoa</taxon>
        <taxon>Ecdysozoa</taxon>
        <taxon>Arthropoda</taxon>
        <taxon>Crustacea</taxon>
        <taxon>Multicrustacea</taxon>
        <taxon>Malacostraca</taxon>
        <taxon>Eumalacostraca</taxon>
        <taxon>Eucarida</taxon>
        <taxon>Decapoda</taxon>
        <taxon>Pleocyemata</taxon>
        <taxon>Brachyura</taxon>
        <taxon>Eubrachyura</taxon>
        <taxon>Majoidea</taxon>
        <taxon>Majidae</taxon>
        <taxon>Chionoecetes</taxon>
    </lineage>
</organism>
<proteinExistence type="evidence at protein level"/>